<accession>P55927</accession>
<protein>
    <recommendedName>
        <fullName>Potassium channel toxin alpha-KTx 7.1</fullName>
    </recommendedName>
    <alternativeName>
        <fullName>Pandinotoxin-alpha</fullName>
    </alternativeName>
    <alternativeName>
        <fullName>Potassium channel-blocking toxin 2</fullName>
        <shortName>Pi-2</shortName>
        <shortName>Pi2</shortName>
    </alternativeName>
    <alternativeName>
        <fullName>Toxin PiTX-K-alpha</fullName>
    </alternativeName>
</protein>
<proteinExistence type="evidence at protein level"/>
<feature type="signal peptide" evidence="2 3">
    <location>
        <begin position="1" status="less than"/>
        <end position="12"/>
    </location>
</feature>
<feature type="peptide" id="PRO_0000035328" description="Potassium channel toxin alpha-KTx 7.1">
    <location>
        <begin position="13"/>
        <end position="47"/>
    </location>
</feature>
<feature type="site" description="Basic residue of the functional dyad" evidence="1">
    <location>
        <position position="36"/>
    </location>
</feature>
<feature type="site" description="Aromatic residue of the functional dyad" evidence="1">
    <location>
        <position position="45"/>
    </location>
</feature>
<feature type="disulfide bond" evidence="4">
    <location>
        <begin position="16"/>
        <end position="37"/>
    </location>
</feature>
<feature type="disulfide bond" evidence="4">
    <location>
        <begin position="22"/>
        <end position="42"/>
    </location>
</feature>
<feature type="disulfide bond" evidence="4">
    <location>
        <begin position="26"/>
        <end position="44"/>
    </location>
</feature>
<feature type="non-terminal residue">
    <location>
        <position position="1"/>
    </location>
</feature>
<feature type="helix" evidence="6">
    <location>
        <begin position="19"/>
        <end position="29"/>
    </location>
</feature>
<feature type="strand" evidence="6">
    <location>
        <begin position="35"/>
        <end position="38"/>
    </location>
</feature>
<feature type="strand" evidence="6">
    <location>
        <begin position="41"/>
        <end position="45"/>
    </location>
</feature>
<gene>
    <name type="primary">PTX-1</name>
</gene>
<comment type="function">
    <text evidence="2">Potent inhibitor of the A-type voltage-gated potassium channels. Most potent inhibitor of Kv1.2/KCNA2 channels. Reversibly block the Shaker B potassium-channels (Kv1.1 sub-family).</text>
</comment>
<comment type="subcellular location">
    <subcellularLocation>
        <location>Secreted</location>
    </subcellularLocation>
</comment>
<comment type="tissue specificity">
    <text>Expressed by the venom gland.</text>
</comment>
<comment type="domain">
    <text>Has the structural arrangement of an alpha-helix connected to a beta-sheet by disulfide bonds (CSalpha/beta).</text>
</comment>
<comment type="similarity">
    <text evidence="5">Belongs to the short scorpion toxin superfamily. Potassium channel inhibitor family. Alpha-KTx 07 subfamily.</text>
</comment>
<evidence type="ECO:0000250" key="1"/>
<evidence type="ECO:0000269" key="2">
    <source>
    </source>
</evidence>
<evidence type="ECO:0000269" key="3">
    <source>
    </source>
</evidence>
<evidence type="ECO:0000269" key="4">
    <source>
    </source>
</evidence>
<evidence type="ECO:0000305" key="5"/>
<evidence type="ECO:0007829" key="6">
    <source>
        <dbReference type="PDB" id="2PTA"/>
    </source>
</evidence>
<name>KAX71_PANIM</name>
<dbReference type="EMBL" id="U79579">
    <property type="protein sequence ID" value="AAB52576.1"/>
    <property type="molecule type" value="mRNA"/>
</dbReference>
<dbReference type="PIR" id="T10471">
    <property type="entry name" value="T10471"/>
</dbReference>
<dbReference type="PDB" id="2PTA">
    <property type="method" value="NMR"/>
    <property type="chains" value="A=13-47"/>
</dbReference>
<dbReference type="PDBsum" id="2PTA"/>
<dbReference type="BMRB" id="P55927"/>
<dbReference type="SMR" id="P55927"/>
<dbReference type="EvolutionaryTrace" id="P55927"/>
<dbReference type="GO" id="GO:0005576">
    <property type="term" value="C:extracellular region"/>
    <property type="evidence" value="ECO:0007669"/>
    <property type="project" value="UniProtKB-SubCell"/>
</dbReference>
<dbReference type="GO" id="GO:0008200">
    <property type="term" value="F:ion channel inhibitor activity"/>
    <property type="evidence" value="ECO:0007669"/>
    <property type="project" value="InterPro"/>
</dbReference>
<dbReference type="GO" id="GO:0015459">
    <property type="term" value="F:potassium channel regulator activity"/>
    <property type="evidence" value="ECO:0007669"/>
    <property type="project" value="UniProtKB-KW"/>
</dbReference>
<dbReference type="GO" id="GO:0090729">
    <property type="term" value="F:toxin activity"/>
    <property type="evidence" value="ECO:0007669"/>
    <property type="project" value="UniProtKB-KW"/>
</dbReference>
<dbReference type="Gene3D" id="3.30.30.10">
    <property type="entry name" value="Knottin, scorpion toxin-like"/>
    <property type="match status" value="1"/>
</dbReference>
<dbReference type="InterPro" id="IPR036574">
    <property type="entry name" value="Scorpion_toxin-like_sf"/>
</dbReference>
<dbReference type="InterPro" id="IPR001947">
    <property type="entry name" value="Scorpion_toxinS_K_inh"/>
</dbReference>
<dbReference type="Pfam" id="PF00451">
    <property type="entry name" value="Toxin_2"/>
    <property type="match status" value="1"/>
</dbReference>
<dbReference type="PRINTS" id="PR00286">
    <property type="entry name" value="CHARYBDTOXIN"/>
</dbReference>
<dbReference type="SUPFAM" id="SSF57095">
    <property type="entry name" value="Scorpion toxin-like"/>
    <property type="match status" value="1"/>
</dbReference>
<dbReference type="PROSITE" id="PS01138">
    <property type="entry name" value="SCORP_SHORT_TOXIN"/>
    <property type="match status" value="1"/>
</dbReference>
<keyword id="KW-0002">3D-structure</keyword>
<keyword id="KW-0903">Direct protein sequencing</keyword>
<keyword id="KW-1015">Disulfide bond</keyword>
<keyword id="KW-0872">Ion channel impairing toxin</keyword>
<keyword id="KW-0528">Neurotoxin</keyword>
<keyword id="KW-0632">Potassium channel impairing toxin</keyword>
<keyword id="KW-0964">Secreted</keyword>
<keyword id="KW-0732">Signal</keyword>
<keyword id="KW-0800">Toxin</keyword>
<keyword id="KW-1220">Voltage-gated potassium channel impairing toxin</keyword>
<reference key="1">
    <citation type="submission" date="1996-11" db="EMBL/GenBank/DDBJ databases">
        <authorList>
            <person name="Rogowski R.S."/>
            <person name="Collins J.H."/>
            <person name="O'Neill T.J."/>
            <person name="Gustafson T.A."/>
            <person name="Werkman T.R."/>
            <person name="Rogawski M.A."/>
            <person name="Tenenholz T.C."/>
            <person name="Weber D.J."/>
            <person name="Blaustein M.P."/>
        </authorList>
    </citation>
    <scope>NUCLEOTIDE SEQUENCE [MRNA]</scope>
</reference>
<reference key="2">
    <citation type="journal article" date="1996" name="Mol. Pharmacol.">
        <title>Three new toxins from the scorpion Pandinus imperator selectively block certain voltage-gated K+ channels.</title>
        <authorList>
            <person name="Rogowski R.S."/>
            <person name="Collins J.H."/>
            <person name="O'Neill T.J."/>
            <person name="Gustafson T.A."/>
            <person name="Werkman T.R."/>
            <person name="Rogawski M.A."/>
            <person name="Tenenholz T.C."/>
            <person name="Weber D.J."/>
            <person name="Blaustein M.P."/>
        </authorList>
    </citation>
    <scope>PROTEIN SEQUENCE OF 13-47</scope>
    <source>
        <tissue>Venom</tissue>
    </source>
</reference>
<reference key="3">
    <citation type="journal article" date="1996" name="J. Membr. Biol.">
        <title>Two novel toxins from the venom of the scorpion Pandinus imperator show that the N-terminal amino acid sequence is important for their affinities towards Shaker B K+ channels.</title>
        <authorList>
            <person name="Gomez-Lagunas F."/>
            <person name="Olamendi-Portugal T."/>
            <person name="Zamudio F.Z."/>
            <person name="Possani L.D."/>
        </authorList>
    </citation>
    <scope>PROTEIN SEQUENCE OF 13-47</scope>
    <scope>FUNCTION</scope>
    <source>
        <tissue>Venom</tissue>
    </source>
</reference>
<reference key="4">
    <citation type="journal article" date="1997" name="Biochemistry">
        <title>Solution structure for Pandinus toxin K-alpha (PiTX-K alpha), a selective blocker of A-type potassium channels.</title>
        <authorList>
            <person name="Tenenholz T.C."/>
            <person name="Rogowski R.S."/>
            <person name="Collins J.H."/>
            <person name="Blaustein M.P."/>
            <person name="Weber D.J."/>
        </authorList>
    </citation>
    <scope>STRUCTURE BY NMR OF 13-47</scope>
    <scope>DISULFIDE BONDS</scope>
</reference>
<organism>
    <name type="scientific">Pandinus imperator</name>
    <name type="common">Emperor scorpion</name>
    <dbReference type="NCBI Taxonomy" id="55084"/>
    <lineage>
        <taxon>Eukaryota</taxon>
        <taxon>Metazoa</taxon>
        <taxon>Ecdysozoa</taxon>
        <taxon>Arthropoda</taxon>
        <taxon>Chelicerata</taxon>
        <taxon>Arachnida</taxon>
        <taxon>Scorpiones</taxon>
        <taxon>Iurida</taxon>
        <taxon>Scorpionoidea</taxon>
        <taxon>Scorpionidae</taxon>
        <taxon>Pandininae</taxon>
        <taxon>Pandinus</taxon>
    </lineage>
</organism>
<sequence>RGSVDYKDDDDKTISCTNPKQCYPHCKKETGYPNAKCMNRKCKCFGR</sequence>